<comment type="function">
    <text evidence="1">Reversibly transfers an adenylyl group from ATP to 4'-phosphopantetheine, yielding dephospho-CoA (dPCoA) and pyrophosphate.</text>
</comment>
<comment type="catalytic activity">
    <reaction evidence="1">
        <text>(R)-4'-phosphopantetheine + ATP + H(+) = 3'-dephospho-CoA + diphosphate</text>
        <dbReference type="Rhea" id="RHEA:19801"/>
        <dbReference type="ChEBI" id="CHEBI:15378"/>
        <dbReference type="ChEBI" id="CHEBI:30616"/>
        <dbReference type="ChEBI" id="CHEBI:33019"/>
        <dbReference type="ChEBI" id="CHEBI:57328"/>
        <dbReference type="ChEBI" id="CHEBI:61723"/>
        <dbReference type="EC" id="2.7.7.3"/>
    </reaction>
</comment>
<comment type="cofactor">
    <cofactor evidence="1">
        <name>Mg(2+)</name>
        <dbReference type="ChEBI" id="CHEBI:18420"/>
    </cofactor>
</comment>
<comment type="pathway">
    <text evidence="1">Cofactor biosynthesis; coenzyme A biosynthesis; CoA from (R)-pantothenate: step 4/5.</text>
</comment>
<comment type="subunit">
    <text evidence="1">Homohexamer.</text>
</comment>
<comment type="subcellular location">
    <subcellularLocation>
        <location evidence="1">Cytoplasm</location>
    </subcellularLocation>
</comment>
<comment type="similarity">
    <text evidence="1">Belongs to the bacterial CoaD family.</text>
</comment>
<keyword id="KW-0067">ATP-binding</keyword>
<keyword id="KW-0173">Coenzyme A biosynthesis</keyword>
<keyword id="KW-0963">Cytoplasm</keyword>
<keyword id="KW-0460">Magnesium</keyword>
<keyword id="KW-0547">Nucleotide-binding</keyword>
<keyword id="KW-0548">Nucleotidyltransferase</keyword>
<keyword id="KW-0808">Transferase</keyword>
<sequence length="163" mass="18379">MTSIAISSGSFDPITLGHLDIIKRGAKVFDEVYVVVLNNSSKKPFFSVEERLDLIREATKDIPNVKVDSHSGLLVEYAKMRNANAILRGLRAVSDFEYEMQITSMNRKLDENIETFFIMTNNQYSFLSSSIVKEVARYGGSVVDLVPPVVERALKEKFQTPLK</sequence>
<reference key="1">
    <citation type="journal article" date="2006" name="J. Bacteriol.">
        <title>Pathogenomic sequence analysis of Bacillus cereus and Bacillus thuringiensis isolates closely related to Bacillus anthracis.</title>
        <authorList>
            <person name="Han C.S."/>
            <person name="Xie G."/>
            <person name="Challacombe J.F."/>
            <person name="Altherr M.R."/>
            <person name="Bhotika S.S."/>
            <person name="Bruce D."/>
            <person name="Campbell C.S."/>
            <person name="Campbell M.L."/>
            <person name="Chen J."/>
            <person name="Chertkov O."/>
            <person name="Cleland C."/>
            <person name="Dimitrijevic M."/>
            <person name="Doggett N.A."/>
            <person name="Fawcett J.J."/>
            <person name="Glavina T."/>
            <person name="Goodwin L.A."/>
            <person name="Hill K.K."/>
            <person name="Hitchcock P."/>
            <person name="Jackson P.J."/>
            <person name="Keim P."/>
            <person name="Kewalramani A.R."/>
            <person name="Longmire J."/>
            <person name="Lucas S."/>
            <person name="Malfatti S."/>
            <person name="McMurry K."/>
            <person name="Meincke L.J."/>
            <person name="Misra M."/>
            <person name="Moseman B.L."/>
            <person name="Mundt M."/>
            <person name="Munk A.C."/>
            <person name="Okinaka R.T."/>
            <person name="Parson-Quintana B."/>
            <person name="Reilly L.P."/>
            <person name="Richardson P."/>
            <person name="Robinson D.L."/>
            <person name="Rubin E."/>
            <person name="Saunders E."/>
            <person name="Tapia R."/>
            <person name="Tesmer J.G."/>
            <person name="Thayer N."/>
            <person name="Thompson L.S."/>
            <person name="Tice H."/>
            <person name="Ticknor L.O."/>
            <person name="Wills P.L."/>
            <person name="Brettin T.S."/>
            <person name="Gilna P."/>
        </authorList>
    </citation>
    <scope>NUCLEOTIDE SEQUENCE [LARGE SCALE GENOMIC DNA]</scope>
    <source>
        <strain>ZK / E33L</strain>
    </source>
</reference>
<name>COAD_BACCZ</name>
<proteinExistence type="inferred from homology"/>
<evidence type="ECO:0000255" key="1">
    <source>
        <dbReference type="HAMAP-Rule" id="MF_00151"/>
    </source>
</evidence>
<gene>
    <name evidence="1" type="primary">coaD</name>
    <name type="ordered locus">BCE33L3688</name>
</gene>
<accession>Q635Z7</accession>
<protein>
    <recommendedName>
        <fullName evidence="1">Phosphopantetheine adenylyltransferase</fullName>
        <ecNumber evidence="1">2.7.7.3</ecNumber>
    </recommendedName>
    <alternativeName>
        <fullName evidence="1">Dephospho-CoA pyrophosphorylase</fullName>
    </alternativeName>
    <alternativeName>
        <fullName evidence="1">Pantetheine-phosphate adenylyltransferase</fullName>
        <shortName evidence="1">PPAT</shortName>
    </alternativeName>
</protein>
<organism>
    <name type="scientific">Bacillus cereus (strain ZK / E33L)</name>
    <dbReference type="NCBI Taxonomy" id="288681"/>
    <lineage>
        <taxon>Bacteria</taxon>
        <taxon>Bacillati</taxon>
        <taxon>Bacillota</taxon>
        <taxon>Bacilli</taxon>
        <taxon>Bacillales</taxon>
        <taxon>Bacillaceae</taxon>
        <taxon>Bacillus</taxon>
        <taxon>Bacillus cereus group</taxon>
    </lineage>
</organism>
<feature type="chain" id="PRO_0000156164" description="Phosphopantetheine adenylyltransferase">
    <location>
        <begin position="1"/>
        <end position="163"/>
    </location>
</feature>
<feature type="binding site" evidence="1">
    <location>
        <begin position="10"/>
        <end position="11"/>
    </location>
    <ligand>
        <name>ATP</name>
        <dbReference type="ChEBI" id="CHEBI:30616"/>
    </ligand>
</feature>
<feature type="binding site" evidence="1">
    <location>
        <position position="10"/>
    </location>
    <ligand>
        <name>substrate</name>
    </ligand>
</feature>
<feature type="binding site" evidence="1">
    <location>
        <position position="18"/>
    </location>
    <ligand>
        <name>ATP</name>
        <dbReference type="ChEBI" id="CHEBI:30616"/>
    </ligand>
</feature>
<feature type="binding site" evidence="1">
    <location>
        <position position="42"/>
    </location>
    <ligand>
        <name>substrate</name>
    </ligand>
</feature>
<feature type="binding site" evidence="1">
    <location>
        <position position="74"/>
    </location>
    <ligand>
        <name>substrate</name>
    </ligand>
</feature>
<feature type="binding site" evidence="1">
    <location>
        <position position="88"/>
    </location>
    <ligand>
        <name>substrate</name>
    </ligand>
</feature>
<feature type="binding site" evidence="1">
    <location>
        <begin position="89"/>
        <end position="91"/>
    </location>
    <ligand>
        <name>ATP</name>
        <dbReference type="ChEBI" id="CHEBI:30616"/>
    </ligand>
</feature>
<feature type="binding site" evidence="1">
    <location>
        <position position="99"/>
    </location>
    <ligand>
        <name>ATP</name>
        <dbReference type="ChEBI" id="CHEBI:30616"/>
    </ligand>
</feature>
<feature type="binding site" evidence="1">
    <location>
        <begin position="124"/>
        <end position="130"/>
    </location>
    <ligand>
        <name>ATP</name>
        <dbReference type="ChEBI" id="CHEBI:30616"/>
    </ligand>
</feature>
<feature type="site" description="Transition state stabilizer" evidence="1">
    <location>
        <position position="18"/>
    </location>
</feature>
<dbReference type="EC" id="2.7.7.3" evidence="1"/>
<dbReference type="EMBL" id="CP000001">
    <property type="protein sequence ID" value="AAU16578.1"/>
    <property type="molecule type" value="Genomic_DNA"/>
</dbReference>
<dbReference type="RefSeq" id="WP_000200598.1">
    <property type="nucleotide sequence ID" value="NZ_CP009968.1"/>
</dbReference>
<dbReference type="SMR" id="Q635Z7"/>
<dbReference type="GeneID" id="92799798"/>
<dbReference type="KEGG" id="bcz:BCE33L3688"/>
<dbReference type="PATRIC" id="fig|288681.22.peg.1723"/>
<dbReference type="UniPathway" id="UPA00241">
    <property type="reaction ID" value="UER00355"/>
</dbReference>
<dbReference type="Proteomes" id="UP000002612">
    <property type="component" value="Chromosome"/>
</dbReference>
<dbReference type="GO" id="GO:0005737">
    <property type="term" value="C:cytoplasm"/>
    <property type="evidence" value="ECO:0007669"/>
    <property type="project" value="UniProtKB-SubCell"/>
</dbReference>
<dbReference type="GO" id="GO:0005524">
    <property type="term" value="F:ATP binding"/>
    <property type="evidence" value="ECO:0007669"/>
    <property type="project" value="UniProtKB-KW"/>
</dbReference>
<dbReference type="GO" id="GO:0004595">
    <property type="term" value="F:pantetheine-phosphate adenylyltransferase activity"/>
    <property type="evidence" value="ECO:0007669"/>
    <property type="project" value="UniProtKB-UniRule"/>
</dbReference>
<dbReference type="GO" id="GO:0015937">
    <property type="term" value="P:coenzyme A biosynthetic process"/>
    <property type="evidence" value="ECO:0007669"/>
    <property type="project" value="UniProtKB-UniRule"/>
</dbReference>
<dbReference type="CDD" id="cd02163">
    <property type="entry name" value="PPAT"/>
    <property type="match status" value="1"/>
</dbReference>
<dbReference type="FunFam" id="3.40.50.620:FF:000012">
    <property type="entry name" value="Phosphopantetheine adenylyltransferase"/>
    <property type="match status" value="1"/>
</dbReference>
<dbReference type="Gene3D" id="3.40.50.620">
    <property type="entry name" value="HUPs"/>
    <property type="match status" value="1"/>
</dbReference>
<dbReference type="HAMAP" id="MF_00151">
    <property type="entry name" value="PPAT_bact"/>
    <property type="match status" value="1"/>
</dbReference>
<dbReference type="InterPro" id="IPR004821">
    <property type="entry name" value="Cyt_trans-like"/>
</dbReference>
<dbReference type="InterPro" id="IPR001980">
    <property type="entry name" value="PPAT"/>
</dbReference>
<dbReference type="InterPro" id="IPR014729">
    <property type="entry name" value="Rossmann-like_a/b/a_fold"/>
</dbReference>
<dbReference type="NCBIfam" id="TIGR01510">
    <property type="entry name" value="coaD_prev_kdtB"/>
    <property type="match status" value="1"/>
</dbReference>
<dbReference type="NCBIfam" id="TIGR00125">
    <property type="entry name" value="cyt_tran_rel"/>
    <property type="match status" value="1"/>
</dbReference>
<dbReference type="PANTHER" id="PTHR21342">
    <property type="entry name" value="PHOSPHOPANTETHEINE ADENYLYLTRANSFERASE"/>
    <property type="match status" value="1"/>
</dbReference>
<dbReference type="PANTHER" id="PTHR21342:SF1">
    <property type="entry name" value="PHOSPHOPANTETHEINE ADENYLYLTRANSFERASE"/>
    <property type="match status" value="1"/>
</dbReference>
<dbReference type="Pfam" id="PF01467">
    <property type="entry name" value="CTP_transf_like"/>
    <property type="match status" value="1"/>
</dbReference>
<dbReference type="PRINTS" id="PR01020">
    <property type="entry name" value="LPSBIOSNTHSS"/>
</dbReference>
<dbReference type="SUPFAM" id="SSF52374">
    <property type="entry name" value="Nucleotidylyl transferase"/>
    <property type="match status" value="1"/>
</dbReference>